<name>GLGA_SALPC</name>
<comment type="function">
    <text evidence="1">Synthesizes alpha-1,4-glucan chains using ADP-glucose.</text>
</comment>
<comment type="catalytic activity">
    <reaction evidence="1">
        <text>[(1-&gt;4)-alpha-D-glucosyl](n) + ADP-alpha-D-glucose = [(1-&gt;4)-alpha-D-glucosyl](n+1) + ADP + H(+)</text>
        <dbReference type="Rhea" id="RHEA:18189"/>
        <dbReference type="Rhea" id="RHEA-COMP:9584"/>
        <dbReference type="Rhea" id="RHEA-COMP:9587"/>
        <dbReference type="ChEBI" id="CHEBI:15378"/>
        <dbReference type="ChEBI" id="CHEBI:15444"/>
        <dbReference type="ChEBI" id="CHEBI:57498"/>
        <dbReference type="ChEBI" id="CHEBI:456216"/>
        <dbReference type="EC" id="2.4.1.21"/>
    </reaction>
</comment>
<comment type="pathway">
    <text evidence="1">Glycan biosynthesis; glycogen biosynthesis.</text>
</comment>
<comment type="similarity">
    <text evidence="1">Belongs to the glycosyltransferase 1 family. Bacterial/plant glycogen synthase subfamily.</text>
</comment>
<sequence length="477" mass="52973">MQVLHVCSEMFPLLKTGGLADVIGALPAAQIADGVDVRVLLPGFPDIRRGIPDAHVVSRRDTFAGKISLLFGHYNGVGIYLIDAPHLYERPGSPYHDTNLYAYTDNVLRFALLGWVGCEMACGLDPFWRPDVVHAHDWHAGLAPAYLAARGRPAKSVFTVHNLAYQGMFYAKHMDDIELPWSFFNMHGLEFNGQLSFLKAGLYYADHITAVSPTYAREITEPQFAYGMEGLLRQRHLEGRLSGILNGVDEKIWNPESDLLLASRYKRDTLEEKAENKRQLQIAMGLKVNDKVPLFAVVSRLTNQKGLDLVLEALPGLLEQGGQLALLGAGDPVLQEGFLAAAAEHPGQVGVQIGYHEAFSHRIMGGADVILVPSRFEPCGLTQLYGLKYGTLPLVRRTGGLADTVSDSSLENLADGIASGFVFEDSNAWSLLRAIRRAFVLWSRPSLWRFVQRQAMAMDFSWQVAAKSYRELYYRLK</sequence>
<proteinExistence type="inferred from homology"/>
<protein>
    <recommendedName>
        <fullName evidence="1">Glycogen synthase</fullName>
        <ecNumber evidence="1">2.4.1.21</ecNumber>
    </recommendedName>
    <alternativeName>
        <fullName evidence="1">Starch [bacterial glycogen] synthase</fullName>
    </alternativeName>
</protein>
<feature type="chain" id="PRO_1000190082" description="Glycogen synthase">
    <location>
        <begin position="1"/>
        <end position="477"/>
    </location>
</feature>
<feature type="binding site" evidence="1">
    <location>
        <position position="15"/>
    </location>
    <ligand>
        <name>ADP-alpha-D-glucose</name>
        <dbReference type="ChEBI" id="CHEBI:57498"/>
    </ligand>
</feature>
<keyword id="KW-0320">Glycogen biosynthesis</keyword>
<keyword id="KW-0328">Glycosyltransferase</keyword>
<keyword id="KW-0808">Transferase</keyword>
<reference key="1">
    <citation type="journal article" date="2009" name="PLoS ONE">
        <title>Salmonella paratyphi C: genetic divergence from Salmonella choleraesuis and pathogenic convergence with Salmonella typhi.</title>
        <authorList>
            <person name="Liu W.-Q."/>
            <person name="Feng Y."/>
            <person name="Wang Y."/>
            <person name="Zou Q.-H."/>
            <person name="Chen F."/>
            <person name="Guo J.-T."/>
            <person name="Peng Y.-H."/>
            <person name="Jin Y."/>
            <person name="Li Y.-G."/>
            <person name="Hu S.-N."/>
            <person name="Johnston R.N."/>
            <person name="Liu G.-R."/>
            <person name="Liu S.-L."/>
        </authorList>
    </citation>
    <scope>NUCLEOTIDE SEQUENCE [LARGE SCALE GENOMIC DNA]</scope>
    <source>
        <strain>RKS4594</strain>
    </source>
</reference>
<gene>
    <name evidence="1" type="primary">glgA</name>
    <name type="ordered locus">SPC_3604</name>
</gene>
<evidence type="ECO:0000255" key="1">
    <source>
        <dbReference type="HAMAP-Rule" id="MF_00484"/>
    </source>
</evidence>
<accession>C0Q0K9</accession>
<organism>
    <name type="scientific">Salmonella paratyphi C (strain RKS4594)</name>
    <dbReference type="NCBI Taxonomy" id="476213"/>
    <lineage>
        <taxon>Bacteria</taxon>
        <taxon>Pseudomonadati</taxon>
        <taxon>Pseudomonadota</taxon>
        <taxon>Gammaproteobacteria</taxon>
        <taxon>Enterobacterales</taxon>
        <taxon>Enterobacteriaceae</taxon>
        <taxon>Salmonella</taxon>
    </lineage>
</organism>
<dbReference type="EC" id="2.4.1.21" evidence="1"/>
<dbReference type="EMBL" id="CP000857">
    <property type="protein sequence ID" value="ACN47686.1"/>
    <property type="molecule type" value="Genomic_DNA"/>
</dbReference>
<dbReference type="RefSeq" id="WP_001197666.1">
    <property type="nucleotide sequence ID" value="NC_012125.1"/>
</dbReference>
<dbReference type="SMR" id="C0Q0K9"/>
<dbReference type="CAZy" id="GT5">
    <property type="family name" value="Glycosyltransferase Family 5"/>
</dbReference>
<dbReference type="KEGG" id="sei:SPC_3604"/>
<dbReference type="HOGENOM" id="CLU_009583_18_4_6"/>
<dbReference type="UniPathway" id="UPA00164"/>
<dbReference type="Proteomes" id="UP000001599">
    <property type="component" value="Chromosome"/>
</dbReference>
<dbReference type="GO" id="GO:0005829">
    <property type="term" value="C:cytosol"/>
    <property type="evidence" value="ECO:0007669"/>
    <property type="project" value="TreeGrafter"/>
</dbReference>
<dbReference type="GO" id="GO:0009011">
    <property type="term" value="F:alpha-1,4-glucan glucosyltransferase (ADP-glucose donor) activity"/>
    <property type="evidence" value="ECO:0007669"/>
    <property type="project" value="UniProtKB-UniRule"/>
</dbReference>
<dbReference type="GO" id="GO:0004373">
    <property type="term" value="F:alpha-1,4-glucan glucosyltransferase (UDP-glucose donor) activity"/>
    <property type="evidence" value="ECO:0007669"/>
    <property type="project" value="InterPro"/>
</dbReference>
<dbReference type="GO" id="GO:0005978">
    <property type="term" value="P:glycogen biosynthetic process"/>
    <property type="evidence" value="ECO:0007669"/>
    <property type="project" value="UniProtKB-UniRule"/>
</dbReference>
<dbReference type="CDD" id="cd03791">
    <property type="entry name" value="GT5_Glycogen_synthase_DULL1-like"/>
    <property type="match status" value="1"/>
</dbReference>
<dbReference type="FunFam" id="3.40.50.2000:FF:000011">
    <property type="entry name" value="Glycogen synthase"/>
    <property type="match status" value="1"/>
</dbReference>
<dbReference type="Gene3D" id="3.40.50.2000">
    <property type="entry name" value="Glycogen Phosphorylase B"/>
    <property type="match status" value="2"/>
</dbReference>
<dbReference type="HAMAP" id="MF_00484">
    <property type="entry name" value="Glycogen_synth"/>
    <property type="match status" value="1"/>
</dbReference>
<dbReference type="InterPro" id="IPR001296">
    <property type="entry name" value="Glyco_trans_1"/>
</dbReference>
<dbReference type="InterPro" id="IPR011835">
    <property type="entry name" value="GS/SS"/>
</dbReference>
<dbReference type="InterPro" id="IPR013534">
    <property type="entry name" value="Starch_synth_cat_dom"/>
</dbReference>
<dbReference type="NCBIfam" id="TIGR02095">
    <property type="entry name" value="glgA"/>
    <property type="match status" value="1"/>
</dbReference>
<dbReference type="NCBIfam" id="NF001899">
    <property type="entry name" value="PRK00654.1-2"/>
    <property type="match status" value="1"/>
</dbReference>
<dbReference type="PANTHER" id="PTHR45825:SF11">
    <property type="entry name" value="ALPHA AMYLASE DOMAIN-CONTAINING PROTEIN"/>
    <property type="match status" value="1"/>
</dbReference>
<dbReference type="PANTHER" id="PTHR45825">
    <property type="entry name" value="GRANULE-BOUND STARCH SYNTHASE 1, CHLOROPLASTIC/AMYLOPLASTIC"/>
    <property type="match status" value="1"/>
</dbReference>
<dbReference type="Pfam" id="PF08323">
    <property type="entry name" value="Glyco_transf_5"/>
    <property type="match status" value="1"/>
</dbReference>
<dbReference type="Pfam" id="PF00534">
    <property type="entry name" value="Glycos_transf_1"/>
    <property type="match status" value="1"/>
</dbReference>
<dbReference type="SUPFAM" id="SSF53756">
    <property type="entry name" value="UDP-Glycosyltransferase/glycogen phosphorylase"/>
    <property type="match status" value="1"/>
</dbReference>